<evidence type="ECO:0000255" key="1">
    <source>
        <dbReference type="HAMAP-Rule" id="MF_00042"/>
    </source>
</evidence>
<evidence type="ECO:0000255" key="2">
    <source>
        <dbReference type="PROSITE-ProRule" id="PRU00408"/>
    </source>
</evidence>
<proteinExistence type="inferred from homology"/>
<protein>
    <recommendedName>
        <fullName evidence="1">Ribonuclease H</fullName>
        <shortName evidence="1">RNase H</shortName>
        <ecNumber evidence="1">3.1.26.4</ecNumber>
    </recommendedName>
</protein>
<dbReference type="EC" id="3.1.26.4" evidence="1"/>
<dbReference type="EMBL" id="CP001048">
    <property type="protein sequence ID" value="ACC90040.1"/>
    <property type="molecule type" value="Genomic_DNA"/>
</dbReference>
<dbReference type="RefSeq" id="WP_002210699.1">
    <property type="nucleotide sequence ID" value="NZ_CP009780.1"/>
</dbReference>
<dbReference type="SMR" id="B2KAC9"/>
<dbReference type="GeneID" id="57977475"/>
<dbReference type="KEGG" id="ypb:YPTS_3083"/>
<dbReference type="PATRIC" id="fig|502801.10.peg.2516"/>
<dbReference type="GO" id="GO:0005737">
    <property type="term" value="C:cytoplasm"/>
    <property type="evidence" value="ECO:0007669"/>
    <property type="project" value="UniProtKB-SubCell"/>
</dbReference>
<dbReference type="GO" id="GO:0000287">
    <property type="term" value="F:magnesium ion binding"/>
    <property type="evidence" value="ECO:0007669"/>
    <property type="project" value="UniProtKB-UniRule"/>
</dbReference>
<dbReference type="GO" id="GO:0003676">
    <property type="term" value="F:nucleic acid binding"/>
    <property type="evidence" value="ECO:0007669"/>
    <property type="project" value="InterPro"/>
</dbReference>
<dbReference type="GO" id="GO:0004523">
    <property type="term" value="F:RNA-DNA hybrid ribonuclease activity"/>
    <property type="evidence" value="ECO:0007669"/>
    <property type="project" value="UniProtKB-UniRule"/>
</dbReference>
<dbReference type="GO" id="GO:0043137">
    <property type="term" value="P:DNA replication, removal of RNA primer"/>
    <property type="evidence" value="ECO:0007669"/>
    <property type="project" value="TreeGrafter"/>
</dbReference>
<dbReference type="CDD" id="cd09278">
    <property type="entry name" value="RNase_HI_prokaryote_like"/>
    <property type="match status" value="1"/>
</dbReference>
<dbReference type="FunFam" id="3.30.420.10:FF:000008">
    <property type="entry name" value="Ribonuclease H"/>
    <property type="match status" value="1"/>
</dbReference>
<dbReference type="Gene3D" id="3.30.420.10">
    <property type="entry name" value="Ribonuclease H-like superfamily/Ribonuclease H"/>
    <property type="match status" value="1"/>
</dbReference>
<dbReference type="HAMAP" id="MF_00042">
    <property type="entry name" value="RNase_H"/>
    <property type="match status" value="1"/>
</dbReference>
<dbReference type="InterPro" id="IPR050092">
    <property type="entry name" value="RNase_H"/>
</dbReference>
<dbReference type="InterPro" id="IPR012337">
    <property type="entry name" value="RNaseH-like_sf"/>
</dbReference>
<dbReference type="InterPro" id="IPR002156">
    <property type="entry name" value="RNaseH_domain"/>
</dbReference>
<dbReference type="InterPro" id="IPR036397">
    <property type="entry name" value="RNaseH_sf"/>
</dbReference>
<dbReference type="InterPro" id="IPR022892">
    <property type="entry name" value="RNaseHI"/>
</dbReference>
<dbReference type="NCBIfam" id="NF001236">
    <property type="entry name" value="PRK00203.1"/>
    <property type="match status" value="1"/>
</dbReference>
<dbReference type="PANTHER" id="PTHR10642">
    <property type="entry name" value="RIBONUCLEASE H1"/>
    <property type="match status" value="1"/>
</dbReference>
<dbReference type="PANTHER" id="PTHR10642:SF26">
    <property type="entry name" value="RIBONUCLEASE H1"/>
    <property type="match status" value="1"/>
</dbReference>
<dbReference type="Pfam" id="PF00075">
    <property type="entry name" value="RNase_H"/>
    <property type="match status" value="1"/>
</dbReference>
<dbReference type="SUPFAM" id="SSF53098">
    <property type="entry name" value="Ribonuclease H-like"/>
    <property type="match status" value="1"/>
</dbReference>
<dbReference type="PROSITE" id="PS50879">
    <property type="entry name" value="RNASE_H_1"/>
    <property type="match status" value="1"/>
</dbReference>
<name>RNH_YERPB</name>
<comment type="function">
    <text evidence="1">Endonuclease that specifically degrades the RNA of RNA-DNA hybrids.</text>
</comment>
<comment type="catalytic activity">
    <reaction evidence="1">
        <text>Endonucleolytic cleavage to 5'-phosphomonoester.</text>
        <dbReference type="EC" id="3.1.26.4"/>
    </reaction>
</comment>
<comment type="cofactor">
    <cofactor evidence="1">
        <name>Mg(2+)</name>
        <dbReference type="ChEBI" id="CHEBI:18420"/>
    </cofactor>
    <text evidence="1">Binds 1 Mg(2+) ion per subunit. May bind a second metal ion at a regulatory site, or after substrate binding.</text>
</comment>
<comment type="subunit">
    <text evidence="1">Monomer.</text>
</comment>
<comment type="subcellular location">
    <subcellularLocation>
        <location evidence="1">Cytoplasm</location>
    </subcellularLocation>
</comment>
<comment type="similarity">
    <text evidence="1">Belongs to the RNase H family.</text>
</comment>
<feature type="chain" id="PRO_1000090924" description="Ribonuclease H">
    <location>
        <begin position="1"/>
        <end position="154"/>
    </location>
</feature>
<feature type="domain" description="RNase H type-1" evidence="2">
    <location>
        <begin position="1"/>
        <end position="142"/>
    </location>
</feature>
<feature type="binding site" evidence="1">
    <location>
        <position position="10"/>
    </location>
    <ligand>
        <name>Mg(2+)</name>
        <dbReference type="ChEBI" id="CHEBI:18420"/>
        <label>1</label>
    </ligand>
</feature>
<feature type="binding site" evidence="1">
    <location>
        <position position="10"/>
    </location>
    <ligand>
        <name>Mg(2+)</name>
        <dbReference type="ChEBI" id="CHEBI:18420"/>
        <label>2</label>
    </ligand>
</feature>
<feature type="binding site" evidence="1">
    <location>
        <position position="48"/>
    </location>
    <ligand>
        <name>Mg(2+)</name>
        <dbReference type="ChEBI" id="CHEBI:18420"/>
        <label>1</label>
    </ligand>
</feature>
<feature type="binding site" evidence="1">
    <location>
        <position position="70"/>
    </location>
    <ligand>
        <name>Mg(2+)</name>
        <dbReference type="ChEBI" id="CHEBI:18420"/>
        <label>1</label>
    </ligand>
</feature>
<feature type="binding site" evidence="1">
    <location>
        <position position="134"/>
    </location>
    <ligand>
        <name>Mg(2+)</name>
        <dbReference type="ChEBI" id="CHEBI:18420"/>
        <label>2</label>
    </ligand>
</feature>
<reference key="1">
    <citation type="submission" date="2008-04" db="EMBL/GenBank/DDBJ databases">
        <title>Complete sequence of Yersinia pseudotuberculosis PB1/+.</title>
        <authorList>
            <person name="Copeland A."/>
            <person name="Lucas S."/>
            <person name="Lapidus A."/>
            <person name="Glavina del Rio T."/>
            <person name="Dalin E."/>
            <person name="Tice H."/>
            <person name="Bruce D."/>
            <person name="Goodwin L."/>
            <person name="Pitluck S."/>
            <person name="Munk A.C."/>
            <person name="Brettin T."/>
            <person name="Detter J.C."/>
            <person name="Han C."/>
            <person name="Tapia R."/>
            <person name="Schmutz J."/>
            <person name="Larimer F."/>
            <person name="Land M."/>
            <person name="Hauser L."/>
            <person name="Challacombe J.F."/>
            <person name="Green L."/>
            <person name="Lindler L.E."/>
            <person name="Nikolich M.P."/>
            <person name="Richardson P."/>
        </authorList>
    </citation>
    <scope>NUCLEOTIDE SEQUENCE [LARGE SCALE GENOMIC DNA]</scope>
    <source>
        <strain>PB1/+</strain>
    </source>
</reference>
<keyword id="KW-0963">Cytoplasm</keyword>
<keyword id="KW-0255">Endonuclease</keyword>
<keyword id="KW-0378">Hydrolase</keyword>
<keyword id="KW-0460">Magnesium</keyword>
<keyword id="KW-0479">Metal-binding</keyword>
<keyword id="KW-0540">Nuclease</keyword>
<gene>
    <name evidence="1" type="primary">rnhA</name>
    <name type="ordered locus">YPTS_3083</name>
</gene>
<organism>
    <name type="scientific">Yersinia pseudotuberculosis serotype IB (strain PB1/+)</name>
    <dbReference type="NCBI Taxonomy" id="502801"/>
    <lineage>
        <taxon>Bacteria</taxon>
        <taxon>Pseudomonadati</taxon>
        <taxon>Pseudomonadota</taxon>
        <taxon>Gammaproteobacteria</taxon>
        <taxon>Enterobacterales</taxon>
        <taxon>Yersiniaceae</taxon>
        <taxon>Yersinia</taxon>
    </lineage>
</organism>
<accession>B2KAC9</accession>
<sequence length="154" mass="17464">MTKQVEIFTDGSCLGNPGPGGYGAILRYKQHEKTFSAGYYLTTNNRMELMAAIVALEALTSPCEVTLSTDSQYVRQGITQWIHNWKKRGWKTADRKPVRNVDLWQRLDLAIQSHTIQWEWVKGHAGHPENERCDELARQGANSPTLDDTGYNPD</sequence>